<gene>
    <name type="primary">crtI</name>
    <name type="synonym">crtE</name>
</gene>
<evidence type="ECO:0000255" key="1"/>
<evidence type="ECO:0000305" key="2"/>
<reference key="1">
    <citation type="submission" date="1995-07" db="EMBL/GenBank/DDBJ databases">
        <title>Molecular cloning and sequence analysis of crtI gene of Streptomyces setonii.</title>
        <authorList>
            <person name="Hoshi K."/>
        </authorList>
    </citation>
    <scope>NUCLEOTIDE SEQUENCE [GENOMIC DNA]</scope>
    <source>
        <strain>ISP 5395</strain>
    </source>
</reference>
<reference key="2">
    <citation type="journal article" date="1996" name="Mol. Gen. Genet.">
        <title>Activation and analysis of cryptic crt genes for carotenoid biosynthesis from Streptomyces griseus.</title>
        <authorList>
            <person name="Schumann G."/>
            <person name="Nurnberger H."/>
            <person name="Sandmann G."/>
            <person name="Kruegel H.J."/>
        </authorList>
    </citation>
    <scope>NUCLEOTIDE SEQUENCE [GENOMIC DNA]</scope>
    <source>
        <strain>JA 3933</strain>
    </source>
</reference>
<keyword id="KW-0125">Carotenoid biosynthesis</keyword>
<keyword id="KW-0274">FAD</keyword>
<keyword id="KW-0285">Flavoprotein</keyword>
<keyword id="KW-0520">NAD</keyword>
<keyword id="KW-0560">Oxidoreductase</keyword>
<proteinExistence type="inferred from homology"/>
<organism>
    <name type="scientific">Streptomyces griseus</name>
    <dbReference type="NCBI Taxonomy" id="1911"/>
    <lineage>
        <taxon>Bacteria</taxon>
        <taxon>Bacillati</taxon>
        <taxon>Actinomycetota</taxon>
        <taxon>Actinomycetes</taxon>
        <taxon>Kitasatosporales</taxon>
        <taxon>Streptomycetaceae</taxon>
        <taxon>Streptomyces</taxon>
    </lineage>
</organism>
<sequence>MITVKGPVDHVVVVGAGLAGLAAALHLLGAGRRVTVVEREDVPGGRAGLLESGGFRIDTGPTVLTMPDLVEDAFAAVGERMADRLELIRLAPAYRARFADGSQLDVHTDGAAMEAAVEEFAGARQAVGYRRLRIWLERLYRVQMRRFIDTNFDSPLQLAHPDLARLAALGGFGRLDARIGHFVSDERLRRVFSFQALYAGVPPARALAAYAVIAYMDTVAGVYFPRGGMHALPRAMADAASDAGAVLRYGQRVTRLERSGDRVTAVVTDQEHIPCDAVVLTPDLPVSYRLLGRTPHRPLPLRHSPSAVILHTGTDRTWPDLAHHTISFGAAWKNTFHELTRTGRLMSDPSLLITRPTATDPSLAPPGKHLHYVLAPCPNTEVGPGVREWRELGPRYRDELLAELERREMPGLGAAIEEEGLVTPVDWTAQGHAAGTPFSVAHTFPQTGPFRPRNLVRGTVNAVLAGCGTTPGVGVPTVLISGKLAAERITGPRIARAPRSAPGGSSA</sequence>
<comment type="function">
    <text>This enzyme converts phytoene into zeta-carotene via the intermediary of phytofluene by the symmetrical introduction of two double bonds at the C-11 and C-11' positions of phytoene.</text>
</comment>
<comment type="cofactor">
    <cofactor evidence="2">
        <name>FAD</name>
        <dbReference type="ChEBI" id="CHEBI:57692"/>
    </cofactor>
</comment>
<comment type="pathway">
    <text>Carotenoid biosynthesis; lycopene biosynthesis.</text>
</comment>
<comment type="similarity">
    <text evidence="2">Belongs to the carotenoid/retinoid oxidoreductase family.</text>
</comment>
<protein>
    <recommendedName>
        <fullName>Phytoene dehydrogenase</fullName>
        <ecNumber>1.3.99.-</ecNumber>
    </recommendedName>
    <alternativeName>
        <fullName>Phytoene desaturase</fullName>
    </alternativeName>
</protein>
<feature type="chain" id="PRO_0000067692" description="Phytoene dehydrogenase">
    <location>
        <begin position="1"/>
        <end position="507"/>
    </location>
</feature>
<feature type="binding site" evidence="1">
    <location>
        <begin position="12"/>
        <end position="45"/>
    </location>
    <ligand>
        <name>FAD</name>
        <dbReference type="ChEBI" id="CHEBI:57692"/>
    </ligand>
</feature>
<feature type="sequence conflict" description="In Ref. 1; BAA09537." evidence="2" ref="1">
    <original>R</original>
    <variation>S</variation>
    <location>
        <position position="33"/>
    </location>
</feature>
<feature type="sequence conflict" description="In Ref. 1; BAA09537." evidence="2" ref="1">
    <original>RED</original>
    <variation>QEG</variation>
    <location>
        <begin position="39"/>
        <end position="41"/>
    </location>
</feature>
<feature type="sequence conflict" description="In Ref. 1; BAA09537." evidence="2" ref="1">
    <original>SG</original>
    <variation>TD</variation>
    <location>
        <begin position="52"/>
        <end position="53"/>
    </location>
</feature>
<feature type="sequence conflict" description="In Ref. 1; BAA09537." evidence="2" ref="1">
    <original>I</original>
    <variation>V</variation>
    <location>
        <position position="57"/>
    </location>
</feature>
<feature type="sequence conflict" description="In Ref. 1; BAA09537." evidence="2" ref="1">
    <original>D</original>
    <variation>E</variation>
    <location>
        <position position="72"/>
    </location>
</feature>
<feature type="sequence conflict" description="In Ref. 1; BAA09537." evidence="2" ref="1">
    <original>R</original>
    <variation>P</variation>
    <location>
        <position position="80"/>
    </location>
</feature>
<feature type="sequence conflict" description="In Ref. 1; BAA09537." evidence="2" ref="1">
    <original>A</original>
    <variation>D</variation>
    <location>
        <position position="91"/>
    </location>
</feature>
<feature type="sequence conflict" description="In Ref. 1; BAA09537." evidence="2" ref="1">
    <original>E</original>
    <variation>Q</variation>
    <location>
        <position position="119"/>
    </location>
</feature>
<feature type="sequence conflict" description="In Ref. 1; BAA09537." evidence="2" ref="1">
    <original>T</original>
    <variation>A</variation>
    <location>
        <position position="150"/>
    </location>
</feature>
<feature type="sequence conflict" description="In Ref. 1; BAA09537." evidence="2" ref="1">
    <original>L</original>
    <variation>F</variation>
    <location>
        <position position="156"/>
    </location>
</feature>
<feature type="sequence conflict" description="In Ref. 1; BAA09537." evidence="2" ref="1">
    <original>A</original>
    <variation>V</variation>
    <location>
        <position position="159"/>
    </location>
</feature>
<feature type="sequence conflict" description="In Ref. 1; BAA09537." evidence="2" ref="1">
    <original>S</original>
    <variation>A</variation>
    <location>
        <position position="241"/>
    </location>
</feature>
<feature type="sequence conflict" description="In Ref. 1; BAA09537." evidence="2" ref="1">
    <original>VL</original>
    <variation>SF</variation>
    <location>
        <begin position="246"/>
        <end position="247"/>
    </location>
</feature>
<feature type="sequence conflict" description="In Ref. 1; BAA09537." evidence="2" ref="1">
    <original>R</original>
    <variation>S</variation>
    <location>
        <position position="252"/>
    </location>
</feature>
<feature type="sequence conflict" description="In Ref. 1; BAA09537." evidence="2" ref="1">
    <original>HIP</original>
    <variation>RIA</variation>
    <location>
        <begin position="272"/>
        <end position="274"/>
    </location>
</feature>
<feature type="sequence conflict" description="In Ref. 1; BAA09537." evidence="2" ref="1">
    <original>T</original>
    <variation>S</variation>
    <location>
        <position position="294"/>
    </location>
</feature>
<feature type="sequence conflict" description="In Ref. 1; BAA09537." evidence="2" ref="1">
    <original>T</original>
    <variation>A</variation>
    <location>
        <position position="312"/>
    </location>
</feature>
<feature type="sequence conflict" description="In Ref. 1; BAA09537." evidence="2" ref="1">
    <original>D</original>
    <variation>N</variation>
    <location>
        <position position="320"/>
    </location>
</feature>
<feature type="sequence conflict" description="In Ref. 1; BAA09537." evidence="2" ref="1">
    <original>N</original>
    <variation>S</variation>
    <location>
        <position position="334"/>
    </location>
</feature>
<feature type="sequence conflict" description="In Ref. 1; BAA09537." evidence="2" ref="1">
    <original>R</original>
    <variation>E</variation>
    <location>
        <position position="344"/>
    </location>
</feature>
<feature type="sequence conflict" description="In Ref. 1; BAA09537." evidence="2" ref="1">
    <original>T</original>
    <variation>S</variation>
    <location>
        <position position="359"/>
    </location>
</feature>
<feature type="sequence conflict" description="In Ref. 1; BAA09537." evidence="2" ref="1">
    <original>G</original>
    <variation>S</variation>
    <location>
        <position position="367"/>
    </location>
</feature>
<feature type="sequence conflict" description="In Ref. 1; BAA09537." evidence="2" ref="1">
    <original>A</original>
    <variation>S</variation>
    <location>
        <position position="414"/>
    </location>
</feature>
<feature type="sequence conflict" description="In Ref. 1; BAA09537." evidence="2" ref="1">
    <original>E</original>
    <variation>V</variation>
    <location>
        <position position="418"/>
    </location>
</feature>
<feature type="sequence conflict" description="In Ref. 1; BAA09537." evidence="2" ref="1">
    <original>R</original>
    <variation>G</variation>
    <location>
        <position position="453"/>
    </location>
</feature>
<feature type="sequence conflict" description="In Ref. 1; BAA09537." evidence="2" ref="1">
    <original>E</original>
    <variation>Q</variation>
    <location>
        <position position="487"/>
    </location>
</feature>
<feature type="sequence conflict" description="In Ref. 1; BAA09537." evidence="2" ref="1">
    <original>RIARAPRSAPGGSSA</original>
    <variation>PPFRDPAREVLSHDRP</variation>
    <location>
        <begin position="493"/>
        <end position="507"/>
    </location>
</feature>
<accession>P54981</accession>
<accession>P54971</accession>
<accession>P72447</accession>
<name>CRTI_STRGR</name>
<dbReference type="EC" id="1.3.99.-"/>
<dbReference type="EMBL" id="D55723">
    <property type="protein sequence ID" value="BAA09537.1"/>
    <property type="molecule type" value="Genomic_DNA"/>
</dbReference>
<dbReference type="EMBL" id="L37405">
    <property type="protein sequence ID" value="AAA91950.1"/>
    <property type="molecule type" value="Genomic_DNA"/>
</dbReference>
<dbReference type="EMBL" id="X95596">
    <property type="protein sequence ID" value="CAA64850.1"/>
    <property type="molecule type" value="Genomic_DNA"/>
</dbReference>
<dbReference type="SMR" id="P54981"/>
<dbReference type="STRING" id="1911.GCA_001715295_00968"/>
<dbReference type="BioCyc" id="MetaCyc:MONOMER-20342"/>
<dbReference type="UniPathway" id="UPA00803"/>
<dbReference type="GO" id="GO:0016627">
    <property type="term" value="F:oxidoreductase activity, acting on the CH-CH group of donors"/>
    <property type="evidence" value="ECO:0007669"/>
    <property type="project" value="UniProtKB-ARBA"/>
</dbReference>
<dbReference type="GO" id="GO:0016117">
    <property type="term" value="P:carotenoid biosynthetic process"/>
    <property type="evidence" value="ECO:0007669"/>
    <property type="project" value="UniProtKB-KW"/>
</dbReference>
<dbReference type="Gene3D" id="3.50.50.60">
    <property type="entry name" value="FAD/NAD(P)-binding domain"/>
    <property type="match status" value="2"/>
</dbReference>
<dbReference type="InterPro" id="IPR002937">
    <property type="entry name" value="Amino_oxidase"/>
</dbReference>
<dbReference type="InterPro" id="IPR014105">
    <property type="entry name" value="Carotenoid/retinoid_OxRdtase"/>
</dbReference>
<dbReference type="InterPro" id="IPR036188">
    <property type="entry name" value="FAD/NAD-bd_sf"/>
</dbReference>
<dbReference type="InterPro" id="IPR008150">
    <property type="entry name" value="Phytoene_DH_bac_CS"/>
</dbReference>
<dbReference type="NCBIfam" id="TIGR02734">
    <property type="entry name" value="crtI_fam"/>
    <property type="match status" value="1"/>
</dbReference>
<dbReference type="PANTHER" id="PTHR43734">
    <property type="entry name" value="PHYTOENE DESATURASE"/>
    <property type="match status" value="1"/>
</dbReference>
<dbReference type="PANTHER" id="PTHR43734:SF1">
    <property type="entry name" value="PHYTOENE DESATURASE"/>
    <property type="match status" value="1"/>
</dbReference>
<dbReference type="Pfam" id="PF01593">
    <property type="entry name" value="Amino_oxidase"/>
    <property type="match status" value="1"/>
</dbReference>
<dbReference type="PRINTS" id="PR00419">
    <property type="entry name" value="ADXRDTASE"/>
</dbReference>
<dbReference type="SUPFAM" id="SSF51905">
    <property type="entry name" value="FAD/NAD(P)-binding domain"/>
    <property type="match status" value="1"/>
</dbReference>
<dbReference type="PROSITE" id="PS00982">
    <property type="entry name" value="PHYTOENE_DH"/>
    <property type="match status" value="1"/>
</dbReference>